<dbReference type="EC" id="2.7.7.19"/>
<dbReference type="EMBL" id="AF218840">
    <property type="protein sequence ID" value="AAF81013.1"/>
    <property type="status" value="ALT_INIT"/>
    <property type="molecule type" value="mRNA"/>
</dbReference>
<dbReference type="EMBL" id="AC092610">
    <property type="protein sequence ID" value="AAS07561.1"/>
    <property type="status" value="ALT_INIT"/>
    <property type="molecule type" value="Genomic_DNA"/>
</dbReference>
<dbReference type="EMBL" id="BC036653">
    <property type="protein sequence ID" value="AAH36653.2"/>
    <property type="molecule type" value="mRNA"/>
</dbReference>
<dbReference type="CCDS" id="CCDS78202.1"/>
<dbReference type="RefSeq" id="NP_064529.4">
    <property type="nucleotide sequence ID" value="NM_020144.4"/>
</dbReference>
<dbReference type="SMR" id="Q9NRJ5"/>
<dbReference type="BioGRID" id="121233">
    <property type="interactions" value="7"/>
</dbReference>
<dbReference type="FunCoup" id="Q9NRJ5">
    <property type="interactions" value="1020"/>
</dbReference>
<dbReference type="IntAct" id="Q9NRJ5">
    <property type="interactions" value="1"/>
</dbReference>
<dbReference type="STRING" id="9606.ENSP00000384700"/>
<dbReference type="iPTMnet" id="Q9NRJ5"/>
<dbReference type="PhosphoSitePlus" id="Q9NRJ5"/>
<dbReference type="BioMuta" id="PAPOLB"/>
<dbReference type="DMDM" id="18203318"/>
<dbReference type="jPOST" id="Q9NRJ5"/>
<dbReference type="MassIVE" id="Q9NRJ5"/>
<dbReference type="PaxDb" id="9606-ENSP00000384700"/>
<dbReference type="PeptideAtlas" id="Q9NRJ5"/>
<dbReference type="ProteomicsDB" id="82380"/>
<dbReference type="Antibodypedia" id="24543">
    <property type="antibodies" value="78 antibodies from 20 providers"/>
</dbReference>
<dbReference type="DNASU" id="56903"/>
<dbReference type="Ensembl" id="ENST00000404991.2">
    <property type="protein sequence ID" value="ENSP00000384700.2"/>
    <property type="gene ID" value="ENSG00000218823.2"/>
</dbReference>
<dbReference type="GeneID" id="56903"/>
<dbReference type="KEGG" id="hsa:56903"/>
<dbReference type="MANE-Select" id="ENST00000404991.2">
    <property type="protein sequence ID" value="ENSP00000384700.2"/>
    <property type="RefSeq nucleotide sequence ID" value="NM_020144.5"/>
    <property type="RefSeq protein sequence ID" value="NP_064529.4"/>
</dbReference>
<dbReference type="UCSC" id="uc003snk.4">
    <property type="organism name" value="human"/>
</dbReference>
<dbReference type="AGR" id="HGNC:15970"/>
<dbReference type="CTD" id="56903"/>
<dbReference type="GeneCards" id="PAPOLB"/>
<dbReference type="HGNC" id="HGNC:15970">
    <property type="gene designation" value="PAPOLB"/>
</dbReference>
<dbReference type="HPA" id="ENSG00000218823">
    <property type="expression patterns" value="Tissue enriched (testis)"/>
</dbReference>
<dbReference type="MIM" id="607436">
    <property type="type" value="gene"/>
</dbReference>
<dbReference type="neXtProt" id="NX_Q9NRJ5"/>
<dbReference type="OpenTargets" id="ENSG00000218823"/>
<dbReference type="PharmGKB" id="PA32933"/>
<dbReference type="VEuPathDB" id="HostDB:ENSG00000218823"/>
<dbReference type="eggNOG" id="KOG2245">
    <property type="taxonomic scope" value="Eukaryota"/>
</dbReference>
<dbReference type="GeneTree" id="ENSGT00940000164307"/>
<dbReference type="HOGENOM" id="CLU_011511_1_2_1"/>
<dbReference type="InParanoid" id="Q9NRJ5"/>
<dbReference type="OMA" id="EWKWPQP"/>
<dbReference type="OrthoDB" id="412748at2759"/>
<dbReference type="PAN-GO" id="Q9NRJ5">
    <property type="GO annotations" value="3 GO annotations based on evolutionary models"/>
</dbReference>
<dbReference type="PhylomeDB" id="Q9NRJ5"/>
<dbReference type="TreeFam" id="TF300842"/>
<dbReference type="PathwayCommons" id="Q9NRJ5"/>
<dbReference type="SIGNOR" id="Q9NRJ5"/>
<dbReference type="BioGRID-ORCS" id="56903">
    <property type="hits" value="4 hits in 381 CRISPR screens"/>
</dbReference>
<dbReference type="GenomeRNAi" id="56903"/>
<dbReference type="Pharos" id="Q9NRJ5">
    <property type="development level" value="Tbio"/>
</dbReference>
<dbReference type="PRO" id="PR:Q9NRJ5"/>
<dbReference type="Proteomes" id="UP000005640">
    <property type="component" value="Chromosome 7"/>
</dbReference>
<dbReference type="RNAct" id="Q9NRJ5">
    <property type="molecule type" value="protein"/>
</dbReference>
<dbReference type="Bgee" id="ENSG00000218823">
    <property type="expression patterns" value="Expressed in sperm and 21 other cell types or tissues"/>
</dbReference>
<dbReference type="ExpressionAtlas" id="Q9NRJ5">
    <property type="expression patterns" value="baseline and differential"/>
</dbReference>
<dbReference type="GO" id="GO:0005783">
    <property type="term" value="C:endoplasmic reticulum"/>
    <property type="evidence" value="ECO:0007669"/>
    <property type="project" value="Ensembl"/>
</dbReference>
<dbReference type="GO" id="GO:0005634">
    <property type="term" value="C:nucleus"/>
    <property type="evidence" value="ECO:0000318"/>
    <property type="project" value="GO_Central"/>
</dbReference>
<dbReference type="GO" id="GO:0005524">
    <property type="term" value="F:ATP binding"/>
    <property type="evidence" value="ECO:0007669"/>
    <property type="project" value="UniProtKB-KW"/>
</dbReference>
<dbReference type="GO" id="GO:0046872">
    <property type="term" value="F:metal ion binding"/>
    <property type="evidence" value="ECO:0007669"/>
    <property type="project" value="UniProtKB-KW"/>
</dbReference>
<dbReference type="GO" id="GO:1990817">
    <property type="term" value="F:poly(A) RNA polymerase activity"/>
    <property type="evidence" value="ECO:0000318"/>
    <property type="project" value="GO_Central"/>
</dbReference>
<dbReference type="GO" id="GO:0003723">
    <property type="term" value="F:RNA binding"/>
    <property type="evidence" value="ECO:0007669"/>
    <property type="project" value="UniProtKB-KW"/>
</dbReference>
<dbReference type="GO" id="GO:0006397">
    <property type="term" value="P:mRNA processing"/>
    <property type="evidence" value="ECO:0007669"/>
    <property type="project" value="UniProtKB-KW"/>
</dbReference>
<dbReference type="GO" id="GO:0031123">
    <property type="term" value="P:RNA 3'-end processing"/>
    <property type="evidence" value="ECO:0007669"/>
    <property type="project" value="InterPro"/>
</dbReference>
<dbReference type="CDD" id="cd05402">
    <property type="entry name" value="NT_PAP_TUTase"/>
    <property type="match status" value="1"/>
</dbReference>
<dbReference type="FunFam" id="3.30.460.10:FF:000002">
    <property type="entry name" value="Poly(A) polymerase alpha, putative"/>
    <property type="match status" value="1"/>
</dbReference>
<dbReference type="FunFam" id="1.10.1410.10:FF:000001">
    <property type="entry name" value="Putative poly(A) polymerase gamma"/>
    <property type="match status" value="1"/>
</dbReference>
<dbReference type="FunFam" id="3.30.70.590:FF:000001">
    <property type="entry name" value="Putative poly(A) polymerase gamma"/>
    <property type="match status" value="1"/>
</dbReference>
<dbReference type="Gene3D" id="1.10.1410.10">
    <property type="match status" value="1"/>
</dbReference>
<dbReference type="Gene3D" id="3.30.460.10">
    <property type="entry name" value="Beta Polymerase, domain 2"/>
    <property type="match status" value="1"/>
</dbReference>
<dbReference type="Gene3D" id="3.30.70.590">
    <property type="entry name" value="Poly(A) polymerase predicted RNA binding domain"/>
    <property type="match status" value="1"/>
</dbReference>
<dbReference type="InterPro" id="IPR043519">
    <property type="entry name" value="NT_sf"/>
</dbReference>
<dbReference type="InterPro" id="IPR011068">
    <property type="entry name" value="NuclTrfase_I-like_C"/>
</dbReference>
<dbReference type="InterPro" id="IPR007012">
    <property type="entry name" value="PolA_pol_cen_dom"/>
</dbReference>
<dbReference type="InterPro" id="IPR048840">
    <property type="entry name" value="PolA_pol_NTPase"/>
</dbReference>
<dbReference type="InterPro" id="IPR007010">
    <property type="entry name" value="PolA_pol_RNA-bd_dom"/>
</dbReference>
<dbReference type="InterPro" id="IPR014492">
    <property type="entry name" value="PolyA_polymerase"/>
</dbReference>
<dbReference type="PANTHER" id="PTHR10682">
    <property type="entry name" value="POLY A POLYMERASE"/>
    <property type="match status" value="1"/>
</dbReference>
<dbReference type="PANTHER" id="PTHR10682:SF19">
    <property type="entry name" value="POLY(A) POLYMERASE BETA"/>
    <property type="match status" value="1"/>
</dbReference>
<dbReference type="Pfam" id="PF04928">
    <property type="entry name" value="PAP_central"/>
    <property type="match status" value="1"/>
</dbReference>
<dbReference type="Pfam" id="PF20750">
    <property type="entry name" value="PAP_NTPase"/>
    <property type="match status" value="1"/>
</dbReference>
<dbReference type="Pfam" id="PF04926">
    <property type="entry name" value="PAP_RNA-bind"/>
    <property type="match status" value="1"/>
</dbReference>
<dbReference type="PIRSF" id="PIRSF018425">
    <property type="entry name" value="PolyA_polymerase"/>
    <property type="match status" value="1"/>
</dbReference>
<dbReference type="SUPFAM" id="SSF81301">
    <property type="entry name" value="Nucleotidyltransferase"/>
    <property type="match status" value="1"/>
</dbReference>
<dbReference type="SUPFAM" id="SSF55003">
    <property type="entry name" value="PAP/Archaeal CCA-adding enzyme, C-terminal domain"/>
    <property type="match status" value="1"/>
</dbReference>
<dbReference type="SUPFAM" id="SSF81631">
    <property type="entry name" value="PAP/OAS1 substrate-binding domain"/>
    <property type="match status" value="1"/>
</dbReference>
<name>PAPOB_HUMAN</name>
<reference key="1">
    <citation type="submission" date="1999-12" db="EMBL/GenBank/DDBJ databases">
        <title>Testis-specific poly(A) polymerase gene is conserved in human and mouse.</title>
        <authorList>
            <person name="Lee Y."/>
            <person name="Kim H."/>
            <person name="Chung J."/>
            <person name="Lee Y."/>
        </authorList>
    </citation>
    <scope>NUCLEOTIDE SEQUENCE [MRNA]</scope>
</reference>
<reference key="2">
    <citation type="journal article" date="2003" name="Nature">
        <title>The DNA sequence of human chromosome 7.</title>
        <authorList>
            <person name="Hillier L.W."/>
            <person name="Fulton R.S."/>
            <person name="Fulton L.A."/>
            <person name="Graves T.A."/>
            <person name="Pepin K.H."/>
            <person name="Wagner-McPherson C."/>
            <person name="Layman D."/>
            <person name="Maas J."/>
            <person name="Jaeger S."/>
            <person name="Walker R."/>
            <person name="Wylie K."/>
            <person name="Sekhon M."/>
            <person name="Becker M.C."/>
            <person name="O'Laughlin M.D."/>
            <person name="Schaller M.E."/>
            <person name="Fewell G.A."/>
            <person name="Delehaunty K.D."/>
            <person name="Miner T.L."/>
            <person name="Nash W.E."/>
            <person name="Cordes M."/>
            <person name="Du H."/>
            <person name="Sun H."/>
            <person name="Edwards J."/>
            <person name="Bradshaw-Cordum H."/>
            <person name="Ali J."/>
            <person name="Andrews S."/>
            <person name="Isak A."/>
            <person name="Vanbrunt A."/>
            <person name="Nguyen C."/>
            <person name="Du F."/>
            <person name="Lamar B."/>
            <person name="Courtney L."/>
            <person name="Kalicki J."/>
            <person name="Ozersky P."/>
            <person name="Bielicki L."/>
            <person name="Scott K."/>
            <person name="Holmes A."/>
            <person name="Harkins R."/>
            <person name="Harris A."/>
            <person name="Strong C.M."/>
            <person name="Hou S."/>
            <person name="Tomlinson C."/>
            <person name="Dauphin-Kohlberg S."/>
            <person name="Kozlowicz-Reilly A."/>
            <person name="Leonard S."/>
            <person name="Rohlfing T."/>
            <person name="Rock S.M."/>
            <person name="Tin-Wollam A.-M."/>
            <person name="Abbott A."/>
            <person name="Minx P."/>
            <person name="Maupin R."/>
            <person name="Strowmatt C."/>
            <person name="Latreille P."/>
            <person name="Miller N."/>
            <person name="Johnson D."/>
            <person name="Murray J."/>
            <person name="Woessner J.P."/>
            <person name="Wendl M.C."/>
            <person name="Yang S.-P."/>
            <person name="Schultz B.R."/>
            <person name="Wallis J.W."/>
            <person name="Spieth J."/>
            <person name="Bieri T.A."/>
            <person name="Nelson J.O."/>
            <person name="Berkowicz N."/>
            <person name="Wohldmann P.E."/>
            <person name="Cook L.L."/>
            <person name="Hickenbotham M.T."/>
            <person name="Eldred J."/>
            <person name="Williams D."/>
            <person name="Bedell J.A."/>
            <person name="Mardis E.R."/>
            <person name="Clifton S.W."/>
            <person name="Chissoe S.L."/>
            <person name="Marra M.A."/>
            <person name="Raymond C."/>
            <person name="Haugen E."/>
            <person name="Gillett W."/>
            <person name="Zhou Y."/>
            <person name="James R."/>
            <person name="Phelps K."/>
            <person name="Iadanoto S."/>
            <person name="Bubb K."/>
            <person name="Simms E."/>
            <person name="Levy R."/>
            <person name="Clendenning J."/>
            <person name="Kaul R."/>
            <person name="Kent W.J."/>
            <person name="Furey T.S."/>
            <person name="Baertsch R.A."/>
            <person name="Brent M.R."/>
            <person name="Keibler E."/>
            <person name="Flicek P."/>
            <person name="Bork P."/>
            <person name="Suyama M."/>
            <person name="Bailey J.A."/>
            <person name="Portnoy M.E."/>
            <person name="Torrents D."/>
            <person name="Chinwalla A.T."/>
            <person name="Gish W.R."/>
            <person name="Eddy S.R."/>
            <person name="McPherson J.D."/>
            <person name="Olson M.V."/>
            <person name="Eichler E.E."/>
            <person name="Green E.D."/>
            <person name="Waterston R.H."/>
            <person name="Wilson R.K."/>
        </authorList>
    </citation>
    <scope>NUCLEOTIDE SEQUENCE [LARGE SCALE GENOMIC DNA]</scope>
</reference>
<reference key="3">
    <citation type="journal article" date="2004" name="Genome Res.">
        <title>The status, quality, and expansion of the NIH full-length cDNA project: the Mammalian Gene Collection (MGC).</title>
        <authorList>
            <consortium name="The MGC Project Team"/>
        </authorList>
    </citation>
    <scope>NUCLEOTIDE SEQUENCE [LARGE SCALE MRNA]</scope>
    <source>
        <tissue>Testis</tissue>
    </source>
</reference>
<keyword id="KW-0067">ATP-binding</keyword>
<keyword id="KW-0460">Magnesium</keyword>
<keyword id="KW-0464">Manganese</keyword>
<keyword id="KW-0479">Metal-binding</keyword>
<keyword id="KW-0507">mRNA processing</keyword>
<keyword id="KW-0547">Nucleotide-binding</keyword>
<keyword id="KW-0539">Nucleus</keyword>
<keyword id="KW-1267">Proteomics identification</keyword>
<keyword id="KW-1185">Reference proteome</keyword>
<keyword id="KW-0694">RNA-binding</keyword>
<keyword id="KW-0808">Transferase</keyword>
<sequence>MMPFPVTTQGPPQPAPPPNRYGVSSPISLAVPKETDCLLTQRLIETLRPFGVFEEEEELQRRILVLEKLNNLVKEWIREISESKSLPQSVIENVGGKIFTFGSYRLGVHTKGADIDALCVAPSHVDRSDFFTSFYAKLKLQEEVKDLRAVEEAFVPVIKLCFDGIEIDILFARLALQTIPEDLDLRDDSLLKNLDIRCIRSLNGCRVTDEILHLVPNIDNFRLTLRAIKLWAKCHNIYSNILGFLGGVSWAMLVARTCQLYPNAVASTLVRKFFLVFSEWEWPNPVLLKEPEERNLNLPVWDPRVNPSDRYHLMPIITPAYPQQNSTYNVSISTRMVMIEEFKQGLAITHEILLSKAEWSKLFEAPSFFQKYKHYIVLLASASTEKQHLEWVGLVESKIRILVGSLEKNEFITLAHVNPQSFPAPKENPDMEEFRTMWVIGLGLKKPDNSEILSIDLTYDIQSFTDTVYRQAVNSKMFEMGMKITAMHLRRKELHQLLPHHVLQDKKAHSTEGRRLTDLNDSSFDLSAGCENSMSVPSSTSTMKTGPLISSSQGRNSPALAVMTASVANIQATEFSLQQVNTNESSGVALNESIPHAVSQPAISPSPKAMVARVVSSTCLISHPDLQETQQQTYLIL</sequence>
<feature type="chain" id="PRO_0000051622" description="Poly(A) polymerase beta">
    <location>
        <begin position="1"/>
        <end position="637"/>
    </location>
</feature>
<feature type="region of interest" description="Disordered" evidence="2">
    <location>
        <begin position="1"/>
        <end position="23"/>
    </location>
</feature>
<feature type="region of interest" description="Disordered" evidence="2">
    <location>
        <begin position="535"/>
        <end position="555"/>
    </location>
</feature>
<feature type="compositionally biased region" description="Low complexity" evidence="2">
    <location>
        <begin position="1"/>
        <end position="10"/>
    </location>
</feature>
<feature type="binding site" evidence="1">
    <location>
        <begin position="101"/>
        <end position="103"/>
    </location>
    <ligand>
        <name>ATP</name>
        <dbReference type="ChEBI" id="CHEBI:30616"/>
    </ligand>
</feature>
<feature type="binding site" evidence="1">
    <location>
        <position position="110"/>
    </location>
    <ligand>
        <name>ATP</name>
        <dbReference type="ChEBI" id="CHEBI:30616"/>
    </ligand>
</feature>
<feature type="binding site" evidence="1">
    <location>
        <begin position="114"/>
        <end position="116"/>
    </location>
    <ligand>
        <name>ATP</name>
        <dbReference type="ChEBI" id="CHEBI:30616"/>
    </ligand>
</feature>
<feature type="binding site" evidence="1">
    <location>
        <position position="114"/>
    </location>
    <ligand>
        <name>Mg(2+)</name>
        <dbReference type="ChEBI" id="CHEBI:18420"/>
        <label>1</label>
        <note>catalytic</note>
    </ligand>
</feature>
<feature type="binding site" evidence="1">
    <location>
        <position position="114"/>
    </location>
    <ligand>
        <name>Mg(2+)</name>
        <dbReference type="ChEBI" id="CHEBI:18420"/>
        <label>2</label>
        <note>catalytic</note>
    </ligand>
</feature>
<feature type="binding site" evidence="1">
    <location>
        <position position="116"/>
    </location>
    <ligand>
        <name>Mg(2+)</name>
        <dbReference type="ChEBI" id="CHEBI:18420"/>
        <label>1</label>
        <note>catalytic</note>
    </ligand>
</feature>
<feature type="binding site" evidence="1">
    <location>
        <position position="116"/>
    </location>
    <ligand>
        <name>Mg(2+)</name>
        <dbReference type="ChEBI" id="CHEBI:18420"/>
        <label>2</label>
        <note>catalytic</note>
    </ligand>
</feature>
<feature type="binding site" evidence="1">
    <location>
        <position position="168"/>
    </location>
    <ligand>
        <name>ATP</name>
        <dbReference type="ChEBI" id="CHEBI:30616"/>
    </ligand>
</feature>
<feature type="binding site" evidence="1">
    <location>
        <position position="168"/>
    </location>
    <ligand>
        <name>Mg(2+)</name>
        <dbReference type="ChEBI" id="CHEBI:18420"/>
        <label>2</label>
        <note>catalytic</note>
    </ligand>
</feature>
<feature type="binding site" evidence="1">
    <location>
        <position position="229"/>
    </location>
    <ligand>
        <name>ATP</name>
        <dbReference type="ChEBI" id="CHEBI:30616"/>
    </ligand>
</feature>
<feature type="binding site" evidence="1">
    <location>
        <position position="238"/>
    </location>
    <ligand>
        <name>ATP</name>
        <dbReference type="ChEBI" id="CHEBI:30616"/>
    </ligand>
</feature>
<feature type="binding site" evidence="1">
    <location>
        <begin position="247"/>
        <end position="248"/>
    </location>
    <ligand>
        <name>ATP</name>
        <dbReference type="ChEBI" id="CHEBI:30616"/>
    </ligand>
</feature>
<feature type="site" description="Interaction with RNA" evidence="1">
    <location>
        <position position="154"/>
    </location>
</feature>
<feature type="site" description="Interaction with RNA" evidence="1">
    <location>
        <position position="159"/>
    </location>
</feature>
<feature type="site" description="Interaction with RNA" evidence="1">
    <location>
        <position position="329"/>
    </location>
</feature>
<feature type="site" description="Interaction with RNA" evidence="1">
    <location>
        <position position="400"/>
    </location>
</feature>
<feature type="site" description="Interaction with RNA" evidence="1">
    <location>
        <position position="525"/>
    </location>
</feature>
<feature type="sequence conflict" description="In Ref. 3; AAH36653." evidence="3" ref="3">
    <original>E</original>
    <variation>D</variation>
    <location>
        <position position="67"/>
    </location>
</feature>
<feature type="sequence conflict" description="In Ref. 3; AAH36653." evidence="3" ref="3">
    <original>E</original>
    <variation>Q</variation>
    <location>
        <position position="151"/>
    </location>
</feature>
<feature type="sequence conflict" description="In Ref. 3; AAH36653." evidence="3" ref="3">
    <original>M</original>
    <variation>V</variation>
    <location>
        <position position="487"/>
    </location>
</feature>
<accession>Q9NRJ5</accession>
<accession>Q75LH1</accession>
<accession>Q8NE14</accession>
<gene>
    <name evidence="4" type="primary">PAPOLB</name>
    <name type="synonym">PAPT</name>
</gene>
<proteinExistence type="evidence at protein level"/>
<evidence type="ECO:0000250" key="1"/>
<evidence type="ECO:0000256" key="2">
    <source>
        <dbReference type="SAM" id="MobiDB-lite"/>
    </source>
</evidence>
<evidence type="ECO:0000305" key="3"/>
<evidence type="ECO:0000312" key="4">
    <source>
        <dbReference type="HGNC" id="HGNC:15970"/>
    </source>
</evidence>
<protein>
    <recommendedName>
        <fullName evidence="3">Poly(A) polymerase beta</fullName>
        <shortName>PAP-beta</shortName>
        <ecNumber>2.7.7.19</ecNumber>
    </recommendedName>
    <alternativeName>
        <fullName>Polynucleotide adenylyltransferase beta</fullName>
    </alternativeName>
    <alternativeName>
        <fullName>Testis-specific poly(A) polymerase</fullName>
    </alternativeName>
</protein>
<comment type="catalytic activity">
    <reaction>
        <text>RNA(n) + ATP = RNA(n)-3'-adenine ribonucleotide + diphosphate</text>
        <dbReference type="Rhea" id="RHEA:11332"/>
        <dbReference type="Rhea" id="RHEA-COMP:14527"/>
        <dbReference type="Rhea" id="RHEA-COMP:17347"/>
        <dbReference type="ChEBI" id="CHEBI:30616"/>
        <dbReference type="ChEBI" id="CHEBI:33019"/>
        <dbReference type="ChEBI" id="CHEBI:140395"/>
        <dbReference type="ChEBI" id="CHEBI:173115"/>
        <dbReference type="EC" id="2.7.7.19"/>
    </reaction>
</comment>
<comment type="cofactor">
    <cofactor evidence="1">
        <name>Mg(2+)</name>
        <dbReference type="ChEBI" id="CHEBI:18420"/>
    </cofactor>
    <cofactor evidence="1">
        <name>Mn(2+)</name>
        <dbReference type="ChEBI" id="CHEBI:29035"/>
    </cofactor>
    <text evidence="1">Binds 2 magnesium ions. Also active with manganese.</text>
</comment>
<comment type="subunit">
    <text evidence="1">Interacts with GSG1.</text>
</comment>
<comment type="subcellular location">
    <subcellularLocation>
        <location evidence="3">Nucleus</location>
    </subcellularLocation>
</comment>
<comment type="tissue specificity">
    <text>Testis specific.</text>
</comment>
<comment type="similarity">
    <text evidence="3">Belongs to the poly(A) polymerase family.</text>
</comment>
<comment type="sequence caution" evidence="3">
    <conflict type="erroneous initiation">
        <sequence resource="EMBL-CDS" id="AAF81013"/>
    </conflict>
    <text>Truncated N-terminus.</text>
</comment>
<comment type="sequence caution" evidence="3">
    <conflict type="erroneous initiation">
        <sequence resource="EMBL-CDS" id="AAS07561"/>
    </conflict>
    <text>Truncated N-terminus.</text>
</comment>
<organism>
    <name type="scientific">Homo sapiens</name>
    <name type="common">Human</name>
    <dbReference type="NCBI Taxonomy" id="9606"/>
    <lineage>
        <taxon>Eukaryota</taxon>
        <taxon>Metazoa</taxon>
        <taxon>Chordata</taxon>
        <taxon>Craniata</taxon>
        <taxon>Vertebrata</taxon>
        <taxon>Euteleostomi</taxon>
        <taxon>Mammalia</taxon>
        <taxon>Eutheria</taxon>
        <taxon>Euarchontoglires</taxon>
        <taxon>Primates</taxon>
        <taxon>Haplorrhini</taxon>
        <taxon>Catarrhini</taxon>
        <taxon>Hominidae</taxon>
        <taxon>Homo</taxon>
    </lineage>
</organism>